<accession>A7ZXQ8</accession>
<protein>
    <recommendedName>
        <fullName evidence="1">UPF0250 protein YbeD</fullName>
    </recommendedName>
</protein>
<sequence length="87" mass="9827">MKTKLNELLEFPTPFTYKVMGQALPELVDQVVEVVQRHAPGDYTPTVKPSSKGNYHSVSITINATHIEQVETLYEELGKIDIVRMVL</sequence>
<dbReference type="EMBL" id="CP000802">
    <property type="protein sequence ID" value="ABV05062.1"/>
    <property type="molecule type" value="Genomic_DNA"/>
</dbReference>
<dbReference type="RefSeq" id="WP_000850550.1">
    <property type="nucleotide sequence ID" value="NC_009800.1"/>
</dbReference>
<dbReference type="BMRB" id="A7ZXQ8"/>
<dbReference type="SMR" id="A7ZXQ8"/>
<dbReference type="GeneID" id="93776851"/>
<dbReference type="KEGG" id="ecx:EcHS_A0683"/>
<dbReference type="HOGENOM" id="CLU_161438_2_1_6"/>
<dbReference type="GO" id="GO:0005829">
    <property type="term" value="C:cytosol"/>
    <property type="evidence" value="ECO:0007669"/>
    <property type="project" value="TreeGrafter"/>
</dbReference>
<dbReference type="FunFam" id="3.30.70.260:FF:000002">
    <property type="entry name" value="UPF0250 protein YbeD"/>
    <property type="match status" value="1"/>
</dbReference>
<dbReference type="Gene3D" id="3.30.70.260">
    <property type="match status" value="1"/>
</dbReference>
<dbReference type="HAMAP" id="MF_00659">
    <property type="entry name" value="UPF0250"/>
    <property type="match status" value="1"/>
</dbReference>
<dbReference type="InterPro" id="IPR007454">
    <property type="entry name" value="UPF0250_YbeD-like"/>
</dbReference>
<dbReference type="InterPro" id="IPR027471">
    <property type="entry name" value="YbeD-like_sf"/>
</dbReference>
<dbReference type="NCBIfam" id="NF003447">
    <property type="entry name" value="PRK04998.1"/>
    <property type="match status" value="1"/>
</dbReference>
<dbReference type="PANTHER" id="PTHR38036">
    <property type="entry name" value="UPF0250 PROTEIN YBED"/>
    <property type="match status" value="1"/>
</dbReference>
<dbReference type="PANTHER" id="PTHR38036:SF1">
    <property type="entry name" value="UPF0250 PROTEIN YBED"/>
    <property type="match status" value="1"/>
</dbReference>
<dbReference type="Pfam" id="PF04359">
    <property type="entry name" value="DUF493"/>
    <property type="match status" value="1"/>
</dbReference>
<dbReference type="SUPFAM" id="SSF117991">
    <property type="entry name" value="YbeD/HP0495-like"/>
    <property type="match status" value="1"/>
</dbReference>
<proteinExistence type="inferred from homology"/>
<name>YBED_ECOHS</name>
<reference key="1">
    <citation type="journal article" date="2008" name="J. Bacteriol.">
        <title>The pangenome structure of Escherichia coli: comparative genomic analysis of E. coli commensal and pathogenic isolates.</title>
        <authorList>
            <person name="Rasko D.A."/>
            <person name="Rosovitz M.J."/>
            <person name="Myers G.S.A."/>
            <person name="Mongodin E.F."/>
            <person name="Fricke W.F."/>
            <person name="Gajer P."/>
            <person name="Crabtree J."/>
            <person name="Sebaihia M."/>
            <person name="Thomson N.R."/>
            <person name="Chaudhuri R."/>
            <person name="Henderson I.R."/>
            <person name="Sperandio V."/>
            <person name="Ravel J."/>
        </authorList>
    </citation>
    <scope>NUCLEOTIDE SEQUENCE [LARGE SCALE GENOMIC DNA]</scope>
    <source>
        <strain>HS</strain>
    </source>
</reference>
<evidence type="ECO:0000255" key="1">
    <source>
        <dbReference type="HAMAP-Rule" id="MF_00659"/>
    </source>
</evidence>
<gene>
    <name evidence="1" type="primary">ybeD</name>
    <name type="ordered locus">EcHS_A0683</name>
</gene>
<comment type="similarity">
    <text evidence="1">Belongs to the UPF0250 family.</text>
</comment>
<organism>
    <name type="scientific">Escherichia coli O9:H4 (strain HS)</name>
    <dbReference type="NCBI Taxonomy" id="331112"/>
    <lineage>
        <taxon>Bacteria</taxon>
        <taxon>Pseudomonadati</taxon>
        <taxon>Pseudomonadota</taxon>
        <taxon>Gammaproteobacteria</taxon>
        <taxon>Enterobacterales</taxon>
        <taxon>Enterobacteriaceae</taxon>
        <taxon>Escherichia</taxon>
    </lineage>
</organism>
<feature type="chain" id="PRO_1000061862" description="UPF0250 protein YbeD">
    <location>
        <begin position="1"/>
        <end position="87"/>
    </location>
</feature>